<comment type="function">
    <text evidence="1">Component of the 90S pre-ribosome involved in the maturation of rRNAs. Required for early cleavages of the pre-RNAs in the 40S ribosomal subunit maturation pathway (By similarity).</text>
</comment>
<comment type="subunit">
    <text evidence="1">Associates with 90S and pre-40S pre-ribosomal particles.</text>
</comment>
<comment type="subcellular location">
    <subcellularLocation>
        <location evidence="1">Nucleus</location>
        <location evidence="1">Nucleolus</location>
    </subcellularLocation>
</comment>
<comment type="similarity">
    <text evidence="4">Belongs to the RRP36 family.</text>
</comment>
<proteinExistence type="inferred from homology"/>
<feature type="chain" id="PRO_0000397660" description="rRNA biogenesis protein rrp36">
    <location>
        <begin position="1"/>
        <end position="287"/>
    </location>
</feature>
<feature type="region of interest" description="Disordered" evidence="3">
    <location>
        <begin position="1"/>
        <end position="131"/>
    </location>
</feature>
<feature type="region of interest" description="Disordered" evidence="3">
    <location>
        <begin position="201"/>
        <end position="236"/>
    </location>
</feature>
<feature type="region of interest" description="Disordered" evidence="3">
    <location>
        <begin position="256"/>
        <end position="287"/>
    </location>
</feature>
<feature type="coiled-coil region" evidence="2">
    <location>
        <begin position="30"/>
        <end position="63"/>
    </location>
</feature>
<feature type="coiled-coil region" evidence="2">
    <location>
        <begin position="167"/>
        <end position="215"/>
    </location>
</feature>
<feature type="compositionally biased region" description="Acidic residues" evidence="3">
    <location>
        <begin position="20"/>
        <end position="50"/>
    </location>
</feature>
<feature type="compositionally biased region" description="Basic and acidic residues" evidence="3">
    <location>
        <begin position="201"/>
        <end position="229"/>
    </location>
</feature>
<feature type="compositionally biased region" description="Basic and acidic residues" evidence="3">
    <location>
        <begin position="256"/>
        <end position="266"/>
    </location>
</feature>
<feature type="compositionally biased region" description="Basic residues" evidence="3">
    <location>
        <begin position="267"/>
        <end position="281"/>
    </location>
</feature>
<protein>
    <recommendedName>
        <fullName>rRNA biogenesis protein rrp36</fullName>
    </recommendedName>
    <alternativeName>
        <fullName>Ribosomal RNA-processing protein 36</fullName>
    </alternativeName>
</protein>
<reference key="1">
    <citation type="journal article" date="2011" name="Science">
        <title>Comparative functional genomics of the fission yeasts.</title>
        <authorList>
            <person name="Rhind N."/>
            <person name="Chen Z."/>
            <person name="Yassour M."/>
            <person name="Thompson D.A."/>
            <person name="Haas B.J."/>
            <person name="Habib N."/>
            <person name="Wapinski I."/>
            <person name="Roy S."/>
            <person name="Lin M.F."/>
            <person name="Heiman D.I."/>
            <person name="Young S.K."/>
            <person name="Furuya K."/>
            <person name="Guo Y."/>
            <person name="Pidoux A."/>
            <person name="Chen H.M."/>
            <person name="Robbertse B."/>
            <person name="Goldberg J.M."/>
            <person name="Aoki K."/>
            <person name="Bayne E.H."/>
            <person name="Berlin A.M."/>
            <person name="Desjardins C.A."/>
            <person name="Dobbs E."/>
            <person name="Dukaj L."/>
            <person name="Fan L."/>
            <person name="FitzGerald M.G."/>
            <person name="French C."/>
            <person name="Gujja S."/>
            <person name="Hansen K."/>
            <person name="Keifenheim D."/>
            <person name="Levin J.Z."/>
            <person name="Mosher R.A."/>
            <person name="Mueller C.A."/>
            <person name="Pfiffner J."/>
            <person name="Priest M."/>
            <person name="Russ C."/>
            <person name="Smialowska A."/>
            <person name="Swoboda P."/>
            <person name="Sykes S.M."/>
            <person name="Vaughn M."/>
            <person name="Vengrova S."/>
            <person name="Yoder R."/>
            <person name="Zeng Q."/>
            <person name="Allshire R."/>
            <person name="Baulcombe D."/>
            <person name="Birren B.W."/>
            <person name="Brown W."/>
            <person name="Ekwall K."/>
            <person name="Kellis M."/>
            <person name="Leatherwood J."/>
            <person name="Levin H."/>
            <person name="Margalit H."/>
            <person name="Martienssen R."/>
            <person name="Nieduszynski C.A."/>
            <person name="Spatafora J.W."/>
            <person name="Friedman N."/>
            <person name="Dalgaard J.Z."/>
            <person name="Baumann P."/>
            <person name="Niki H."/>
            <person name="Regev A."/>
            <person name="Nusbaum C."/>
        </authorList>
    </citation>
    <scope>NUCLEOTIDE SEQUENCE [LARGE SCALE GENOMIC DNA]</scope>
    <source>
        <strain>yFS275 / FY16936</strain>
    </source>
</reference>
<name>RRP36_SCHJY</name>
<organism>
    <name type="scientific">Schizosaccharomyces japonicus (strain yFS275 / FY16936)</name>
    <name type="common">Fission yeast</name>
    <dbReference type="NCBI Taxonomy" id="402676"/>
    <lineage>
        <taxon>Eukaryota</taxon>
        <taxon>Fungi</taxon>
        <taxon>Dikarya</taxon>
        <taxon>Ascomycota</taxon>
        <taxon>Taphrinomycotina</taxon>
        <taxon>Schizosaccharomycetes</taxon>
        <taxon>Schizosaccharomycetales</taxon>
        <taxon>Schizosaccharomycetaceae</taxon>
        <taxon>Schizosaccharomyces</taxon>
    </lineage>
</organism>
<accession>B6K8A0</accession>
<sequence>MARNSLRKGTLSSVKPSLEDLNDTSEEDYEVEDVMSEVESTDEANDESEEKTDLESTQRQLKSIPFSELLEAQRALKSEKVKFTQKNGAKLSKNRRRHESPSDSEDDDDDRNDRSKHAPVEMSSKRAVPRFREVVHVPKPLRRDPRFDTLSGNLNVDKVKNNYGFVMEYRLSEIKQLEQELKSCREQERRERIKEALKSLRSKLERRKEDERTARVLKEHRQSEKEKIRQGKKPFYLKKSEQKKLLQLDKYKSMEGTKALDRYMEKKQKRRAQKEKKRLPRARPDRA</sequence>
<keyword id="KW-0175">Coiled coil</keyword>
<keyword id="KW-0539">Nucleus</keyword>
<keyword id="KW-1185">Reference proteome</keyword>
<keyword id="KW-0687">Ribonucleoprotein</keyword>
<keyword id="KW-0690">Ribosome biogenesis</keyword>
<keyword id="KW-0698">rRNA processing</keyword>
<dbReference type="EMBL" id="KE651167">
    <property type="protein sequence ID" value="EEB09754.2"/>
    <property type="molecule type" value="Genomic_DNA"/>
</dbReference>
<dbReference type="RefSeq" id="XP_002176047.2">
    <property type="nucleotide sequence ID" value="XM_002176011.2"/>
</dbReference>
<dbReference type="STRING" id="402676.B6K8A0"/>
<dbReference type="EnsemblFungi" id="EEB09754">
    <property type="protein sequence ID" value="EEB09754"/>
    <property type="gene ID" value="SJAG_04979"/>
</dbReference>
<dbReference type="GeneID" id="7047459"/>
<dbReference type="JaponicusDB" id="SJAG_04979">
    <property type="gene designation" value="rrp36"/>
</dbReference>
<dbReference type="VEuPathDB" id="FungiDB:SJAG_04979"/>
<dbReference type="eggNOG" id="KOG3190">
    <property type="taxonomic scope" value="Eukaryota"/>
</dbReference>
<dbReference type="HOGENOM" id="CLU_048802_4_3_1"/>
<dbReference type="OMA" id="ERKEMPW"/>
<dbReference type="OrthoDB" id="448446at2759"/>
<dbReference type="Proteomes" id="UP000001744">
    <property type="component" value="Unassembled WGS sequence"/>
</dbReference>
<dbReference type="GO" id="GO:0030686">
    <property type="term" value="C:90S preribosome"/>
    <property type="evidence" value="ECO:0000318"/>
    <property type="project" value="GO_Central"/>
</dbReference>
<dbReference type="GO" id="GO:0005730">
    <property type="term" value="C:nucleolus"/>
    <property type="evidence" value="ECO:0000318"/>
    <property type="project" value="GO_Central"/>
</dbReference>
<dbReference type="GO" id="GO:0000462">
    <property type="term" value="P:maturation of SSU-rRNA from tricistronic rRNA transcript (SSU-rRNA, 5.8S rRNA, LSU-rRNA)"/>
    <property type="evidence" value="ECO:0000318"/>
    <property type="project" value="GO_Central"/>
</dbReference>
<dbReference type="InterPro" id="IPR009292">
    <property type="entry name" value="RRP36"/>
</dbReference>
<dbReference type="PANTHER" id="PTHR21738">
    <property type="entry name" value="RIBOSOMAL RNA PROCESSING PROTEIN 36 HOMOLOG"/>
    <property type="match status" value="1"/>
</dbReference>
<dbReference type="PANTHER" id="PTHR21738:SF0">
    <property type="entry name" value="RIBOSOMAL RNA PROCESSING PROTEIN 36 HOMOLOG"/>
    <property type="match status" value="1"/>
</dbReference>
<dbReference type="Pfam" id="PF06102">
    <property type="entry name" value="RRP36"/>
    <property type="match status" value="1"/>
</dbReference>
<evidence type="ECO:0000250" key="1"/>
<evidence type="ECO:0000255" key="2"/>
<evidence type="ECO:0000256" key="3">
    <source>
        <dbReference type="SAM" id="MobiDB-lite"/>
    </source>
</evidence>
<evidence type="ECO:0000305" key="4"/>
<gene>
    <name type="primary">rrp36</name>
    <name type="ORF">SJAG_04979</name>
</gene>